<organism>
    <name type="scientific">Campylobacter lari (strain RM2100 / D67 / ATCC BAA-1060)</name>
    <dbReference type="NCBI Taxonomy" id="306263"/>
    <lineage>
        <taxon>Bacteria</taxon>
        <taxon>Pseudomonadati</taxon>
        <taxon>Campylobacterota</taxon>
        <taxon>Epsilonproteobacteria</taxon>
        <taxon>Campylobacterales</taxon>
        <taxon>Campylobacteraceae</taxon>
        <taxon>Campylobacter</taxon>
    </lineage>
</organism>
<keyword id="KW-0067">ATP-binding</keyword>
<keyword id="KW-0963">Cytoplasm</keyword>
<keyword id="KW-0418">Kinase</keyword>
<keyword id="KW-0545">Nucleotide biosynthesis</keyword>
<keyword id="KW-0547">Nucleotide-binding</keyword>
<keyword id="KW-1185">Reference proteome</keyword>
<keyword id="KW-0808">Transferase</keyword>
<evidence type="ECO:0000255" key="1">
    <source>
        <dbReference type="HAMAP-Rule" id="MF_00235"/>
    </source>
</evidence>
<gene>
    <name evidence="1" type="primary">adk</name>
    <name type="ordered locus">Cla_0648</name>
</gene>
<reference key="1">
    <citation type="journal article" date="2008" name="Foodborne Pathog. Dis.">
        <title>The complete genome sequence and analysis of the human pathogen Campylobacter lari.</title>
        <authorList>
            <person name="Miller W.G."/>
            <person name="Wang G."/>
            <person name="Binnewies T.T."/>
            <person name="Parker C.T."/>
        </authorList>
    </citation>
    <scope>NUCLEOTIDE SEQUENCE [LARGE SCALE GENOMIC DNA]</scope>
    <source>
        <strain>RM2100 / D67 / ATCC BAA-1060</strain>
    </source>
</reference>
<name>KAD_CAMLR</name>
<accession>B9KFZ2</accession>
<protein>
    <recommendedName>
        <fullName evidence="1">Adenylate kinase</fullName>
        <shortName evidence="1">AK</shortName>
        <ecNumber evidence="1">2.7.4.3</ecNumber>
    </recommendedName>
    <alternativeName>
        <fullName evidence="1">ATP-AMP transphosphorylase</fullName>
    </alternativeName>
    <alternativeName>
        <fullName evidence="1">ATP:AMP phosphotransferase</fullName>
    </alternativeName>
    <alternativeName>
        <fullName evidence="1">Adenylate monophosphate kinase</fullName>
    </alternativeName>
</protein>
<comment type="function">
    <text evidence="1">Catalyzes the reversible transfer of the terminal phosphate group between ATP and AMP. Plays an important role in cellular energy homeostasis and in adenine nucleotide metabolism.</text>
</comment>
<comment type="catalytic activity">
    <reaction evidence="1">
        <text>AMP + ATP = 2 ADP</text>
        <dbReference type="Rhea" id="RHEA:12973"/>
        <dbReference type="ChEBI" id="CHEBI:30616"/>
        <dbReference type="ChEBI" id="CHEBI:456215"/>
        <dbReference type="ChEBI" id="CHEBI:456216"/>
        <dbReference type="EC" id="2.7.4.3"/>
    </reaction>
</comment>
<comment type="pathway">
    <text evidence="1">Purine metabolism; AMP biosynthesis via salvage pathway; AMP from ADP: step 1/1.</text>
</comment>
<comment type="subunit">
    <text evidence="1">Monomer.</text>
</comment>
<comment type="subcellular location">
    <subcellularLocation>
        <location evidence="1">Cytoplasm</location>
    </subcellularLocation>
</comment>
<comment type="domain">
    <text evidence="1">Consists of three domains, a large central CORE domain and two small peripheral domains, NMPbind and LID, which undergo movements during catalysis. The LID domain closes over the site of phosphoryl transfer upon ATP binding. Assembling and dissambling the active center during each catalytic cycle provides an effective means to prevent ATP hydrolysis.</text>
</comment>
<comment type="similarity">
    <text evidence="1">Belongs to the adenylate kinase family.</text>
</comment>
<sequence length="190" mass="20964">MKQLFLIIGAPGSGKTTDASIIANDNANITHYSTGDLLRAEVASGSELGKTIDSFISKGNLVPLEVVVNTIITALKNAPTNTILIDGYPRSVEQMLEFDKVLKNQSEVNLKGVIEVKVSEEVARERVLGRARGADDNEEVFNNRMKVYLEPLNEITNFYAKENIHHIINGERSIEAIVADMKNLINELLK</sequence>
<dbReference type="EC" id="2.7.4.3" evidence="1"/>
<dbReference type="EMBL" id="CP000932">
    <property type="protein sequence ID" value="ACM63977.1"/>
    <property type="molecule type" value="Genomic_DNA"/>
</dbReference>
<dbReference type="RefSeq" id="WP_012661360.1">
    <property type="nucleotide sequence ID" value="NC_012039.1"/>
</dbReference>
<dbReference type="SMR" id="B9KFZ2"/>
<dbReference type="STRING" id="306263.Cla_0648"/>
<dbReference type="KEGG" id="cla:CLA_0648"/>
<dbReference type="PATRIC" id="fig|306263.5.peg.628"/>
<dbReference type="eggNOG" id="COG0563">
    <property type="taxonomic scope" value="Bacteria"/>
</dbReference>
<dbReference type="HOGENOM" id="CLU_032354_4_1_7"/>
<dbReference type="UniPathway" id="UPA00588">
    <property type="reaction ID" value="UER00649"/>
</dbReference>
<dbReference type="Proteomes" id="UP000007727">
    <property type="component" value="Chromosome"/>
</dbReference>
<dbReference type="GO" id="GO:0005737">
    <property type="term" value="C:cytoplasm"/>
    <property type="evidence" value="ECO:0007669"/>
    <property type="project" value="UniProtKB-SubCell"/>
</dbReference>
<dbReference type="GO" id="GO:0004017">
    <property type="term" value="F:adenylate kinase activity"/>
    <property type="evidence" value="ECO:0007669"/>
    <property type="project" value="UniProtKB-UniRule"/>
</dbReference>
<dbReference type="GO" id="GO:0005524">
    <property type="term" value="F:ATP binding"/>
    <property type="evidence" value="ECO:0007669"/>
    <property type="project" value="UniProtKB-UniRule"/>
</dbReference>
<dbReference type="GO" id="GO:0044209">
    <property type="term" value="P:AMP salvage"/>
    <property type="evidence" value="ECO:0007669"/>
    <property type="project" value="UniProtKB-UniRule"/>
</dbReference>
<dbReference type="CDD" id="cd01428">
    <property type="entry name" value="ADK"/>
    <property type="match status" value="1"/>
</dbReference>
<dbReference type="Gene3D" id="3.40.50.300">
    <property type="entry name" value="P-loop containing nucleotide triphosphate hydrolases"/>
    <property type="match status" value="1"/>
</dbReference>
<dbReference type="HAMAP" id="MF_00235">
    <property type="entry name" value="Adenylate_kinase_Adk"/>
    <property type="match status" value="1"/>
</dbReference>
<dbReference type="InterPro" id="IPR000850">
    <property type="entry name" value="Adenylat/UMP-CMP_kin"/>
</dbReference>
<dbReference type="InterPro" id="IPR033690">
    <property type="entry name" value="Adenylat_kinase_CS"/>
</dbReference>
<dbReference type="InterPro" id="IPR027417">
    <property type="entry name" value="P-loop_NTPase"/>
</dbReference>
<dbReference type="NCBIfam" id="NF001384">
    <property type="entry name" value="PRK00279.2-2"/>
    <property type="match status" value="1"/>
</dbReference>
<dbReference type="PANTHER" id="PTHR23359">
    <property type="entry name" value="NUCLEOTIDE KINASE"/>
    <property type="match status" value="1"/>
</dbReference>
<dbReference type="Pfam" id="PF00406">
    <property type="entry name" value="ADK"/>
    <property type="match status" value="1"/>
</dbReference>
<dbReference type="PRINTS" id="PR00094">
    <property type="entry name" value="ADENYLTKNASE"/>
</dbReference>
<dbReference type="SUPFAM" id="SSF52540">
    <property type="entry name" value="P-loop containing nucleoside triphosphate hydrolases"/>
    <property type="match status" value="1"/>
</dbReference>
<dbReference type="PROSITE" id="PS00113">
    <property type="entry name" value="ADENYLATE_KINASE"/>
    <property type="match status" value="1"/>
</dbReference>
<proteinExistence type="inferred from homology"/>
<feature type="chain" id="PRO_1000191130" description="Adenylate kinase">
    <location>
        <begin position="1"/>
        <end position="190"/>
    </location>
</feature>
<feature type="region of interest" description="NMP" evidence="1">
    <location>
        <begin position="33"/>
        <end position="62"/>
    </location>
</feature>
<feature type="region of interest" description="LID" evidence="1">
    <location>
        <begin position="129"/>
        <end position="135"/>
    </location>
</feature>
<feature type="binding site" evidence="1">
    <location>
        <begin position="12"/>
        <end position="17"/>
    </location>
    <ligand>
        <name>ATP</name>
        <dbReference type="ChEBI" id="CHEBI:30616"/>
    </ligand>
</feature>
<feature type="binding site" evidence="1">
    <location>
        <position position="34"/>
    </location>
    <ligand>
        <name>AMP</name>
        <dbReference type="ChEBI" id="CHEBI:456215"/>
    </ligand>
</feature>
<feature type="binding site" evidence="1">
    <location>
        <position position="39"/>
    </location>
    <ligand>
        <name>AMP</name>
        <dbReference type="ChEBI" id="CHEBI:456215"/>
    </ligand>
</feature>
<feature type="binding site" evidence="1">
    <location>
        <begin position="60"/>
        <end position="62"/>
    </location>
    <ligand>
        <name>AMP</name>
        <dbReference type="ChEBI" id="CHEBI:456215"/>
    </ligand>
</feature>
<feature type="binding site" evidence="1">
    <location>
        <begin position="87"/>
        <end position="90"/>
    </location>
    <ligand>
        <name>AMP</name>
        <dbReference type="ChEBI" id="CHEBI:456215"/>
    </ligand>
</feature>
<feature type="binding site" evidence="1">
    <location>
        <position position="94"/>
    </location>
    <ligand>
        <name>AMP</name>
        <dbReference type="ChEBI" id="CHEBI:456215"/>
    </ligand>
</feature>
<feature type="binding site" evidence="1">
    <location>
        <position position="130"/>
    </location>
    <ligand>
        <name>ATP</name>
        <dbReference type="ChEBI" id="CHEBI:30616"/>
    </ligand>
</feature>
<feature type="binding site" evidence="1">
    <location>
        <position position="132"/>
    </location>
    <ligand>
        <name>AMP</name>
        <dbReference type="ChEBI" id="CHEBI:456215"/>
    </ligand>
</feature>
<feature type="binding site" evidence="1">
    <location>
        <position position="144"/>
    </location>
    <ligand>
        <name>AMP</name>
        <dbReference type="ChEBI" id="CHEBI:456215"/>
    </ligand>
</feature>
<feature type="binding site" evidence="1">
    <location>
        <position position="172"/>
    </location>
    <ligand>
        <name>ATP</name>
        <dbReference type="ChEBI" id="CHEBI:30616"/>
    </ligand>
</feature>